<name>P4KG8_ARATH</name>
<protein>
    <recommendedName>
        <fullName>Phosphatidylinositol 4-kinase gamma 8</fullName>
        <shortName>AtPI4Kgamma8</shortName>
        <shortName>PI-4Kgamma8</shortName>
        <shortName>PI4K gamma 8</shortName>
        <ecNumber>2.7.1.67</ecNumber>
    </recommendedName>
</protein>
<dbReference type="EC" id="2.7.1.67"/>
<dbReference type="EMBL" id="AL163972">
    <property type="protein sequence ID" value="CAB88063.1"/>
    <property type="molecule type" value="Genomic_DNA"/>
</dbReference>
<dbReference type="EMBL" id="CP002686">
    <property type="protein sequence ID" value="AEE79542.1"/>
    <property type="status" value="ALT_INIT"/>
    <property type="molecule type" value="Genomic_DNA"/>
</dbReference>
<dbReference type="EMBL" id="CP002686">
    <property type="protein sequence ID" value="AEE79543.2"/>
    <property type="molecule type" value="Genomic_DNA"/>
</dbReference>
<dbReference type="EMBL" id="DQ446770">
    <property type="protein sequence ID" value="ABE66021.1"/>
    <property type="molecule type" value="mRNA"/>
</dbReference>
<dbReference type="EMBL" id="AK229660">
    <property type="protein sequence ID" value="BAF01504.1"/>
    <property type="status" value="ALT_INIT"/>
    <property type="molecule type" value="mRNA"/>
</dbReference>
<dbReference type="PIR" id="T49061">
    <property type="entry name" value="T49061"/>
</dbReference>
<dbReference type="RefSeq" id="NP_001319769.1">
    <property type="nucleotide sequence ID" value="NM_001339803.1"/>
</dbReference>
<dbReference type="RefSeq" id="NP_001327285.1">
    <property type="nucleotide sequence ID" value="NM_001339804.1"/>
</dbReference>
<dbReference type="RefSeq" id="NP_191219.2">
    <property type="nucleotide sequence ID" value="NM_115519.3"/>
</dbReference>
<dbReference type="SMR" id="Q0WMZ6"/>
<dbReference type="FunCoup" id="Q0WMZ6">
    <property type="interactions" value="527"/>
</dbReference>
<dbReference type="STRING" id="3702.Q0WMZ6"/>
<dbReference type="PaxDb" id="3702-AT3G56600.1"/>
<dbReference type="ProteomicsDB" id="251361"/>
<dbReference type="EnsemblPlants" id="AT3G56600.2">
    <property type="protein sequence ID" value="AT3G56600.2"/>
    <property type="gene ID" value="AT3G56600"/>
</dbReference>
<dbReference type="GeneID" id="824827"/>
<dbReference type="Gramene" id="AT3G56600.2">
    <property type="protein sequence ID" value="AT3G56600.2"/>
    <property type="gene ID" value="AT3G56600"/>
</dbReference>
<dbReference type="KEGG" id="ath:AT3G56600"/>
<dbReference type="Araport" id="AT3G56600"/>
<dbReference type="TAIR" id="AT3G56600"/>
<dbReference type="eggNOG" id="KOG2381">
    <property type="taxonomic scope" value="Eukaryota"/>
</dbReference>
<dbReference type="HOGENOM" id="CLU_027241_1_1_1"/>
<dbReference type="InParanoid" id="Q0WMZ6"/>
<dbReference type="OMA" id="INREEDW"/>
<dbReference type="PRO" id="PR:Q0WMZ6"/>
<dbReference type="Proteomes" id="UP000006548">
    <property type="component" value="Chromosome 3"/>
</dbReference>
<dbReference type="ExpressionAtlas" id="Q0WMZ6">
    <property type="expression patterns" value="baseline and differential"/>
</dbReference>
<dbReference type="GO" id="GO:0004430">
    <property type="term" value="F:1-phosphatidylinositol 4-kinase activity"/>
    <property type="evidence" value="ECO:0007669"/>
    <property type="project" value="UniProtKB-EC"/>
</dbReference>
<dbReference type="GO" id="GO:0005524">
    <property type="term" value="F:ATP binding"/>
    <property type="evidence" value="ECO:0007669"/>
    <property type="project" value="UniProtKB-KW"/>
</dbReference>
<dbReference type="InterPro" id="IPR044571">
    <property type="entry name" value="P4KG1-8"/>
</dbReference>
<dbReference type="InterPro" id="IPR000403">
    <property type="entry name" value="PI3/4_kinase_cat_dom"/>
</dbReference>
<dbReference type="PANTHER" id="PTHR45800">
    <property type="entry name" value="PHOSPHATIDYLINOSITOL 4-KINASE GAMMA"/>
    <property type="match status" value="1"/>
</dbReference>
<dbReference type="PANTHER" id="PTHR45800:SF21">
    <property type="entry name" value="PHOSPHATIDYLINOSITOL 4-KINASE GAMMA 8"/>
    <property type="match status" value="1"/>
</dbReference>
<dbReference type="Pfam" id="PF00454">
    <property type="entry name" value="PI3_PI4_kinase"/>
    <property type="match status" value="1"/>
</dbReference>
<dbReference type="PROSITE" id="PS50290">
    <property type="entry name" value="PI3_4_KINASE_3"/>
    <property type="match status" value="1"/>
</dbReference>
<feature type="chain" id="PRO_0000423365" description="Phosphatidylinositol 4-kinase gamma 8">
    <location>
        <begin position="1"/>
        <end position="533"/>
    </location>
</feature>
<feature type="domain" description="PI3K/PI4K catalytic" evidence="3">
    <location>
        <begin position="101"/>
        <end position="397"/>
    </location>
</feature>
<feature type="region of interest" description="G-loop" evidence="3">
    <location>
        <begin position="107"/>
        <end position="113"/>
    </location>
</feature>
<feature type="region of interest" description="Catalytic loop" evidence="3">
    <location>
        <begin position="243"/>
        <end position="251"/>
    </location>
</feature>
<feature type="region of interest" description="Activation loop" evidence="3">
    <location>
        <begin position="276"/>
        <end position="302"/>
    </location>
</feature>
<feature type="binding site" evidence="2">
    <location>
        <begin position="108"/>
        <end position="114"/>
    </location>
    <ligand>
        <name>ATP</name>
        <dbReference type="ChEBI" id="CHEBI:30616"/>
    </ligand>
</feature>
<feature type="binding site" evidence="2">
    <location>
        <position position="129"/>
    </location>
    <ligand>
        <name>ATP</name>
        <dbReference type="ChEBI" id="CHEBI:30616"/>
    </ligand>
</feature>
<feature type="binding site" evidence="2">
    <location>
        <begin position="210"/>
        <end position="213"/>
    </location>
    <ligand>
        <name>ATP</name>
        <dbReference type="ChEBI" id="CHEBI:30616"/>
    </ligand>
</feature>
<feature type="binding site" evidence="2">
    <location>
        <position position="278"/>
    </location>
    <ligand>
        <name>ATP</name>
        <dbReference type="ChEBI" id="CHEBI:30616"/>
    </ligand>
</feature>
<organism>
    <name type="scientific">Arabidopsis thaliana</name>
    <name type="common">Mouse-ear cress</name>
    <dbReference type="NCBI Taxonomy" id="3702"/>
    <lineage>
        <taxon>Eukaryota</taxon>
        <taxon>Viridiplantae</taxon>
        <taxon>Streptophyta</taxon>
        <taxon>Embryophyta</taxon>
        <taxon>Tracheophyta</taxon>
        <taxon>Spermatophyta</taxon>
        <taxon>Magnoliopsida</taxon>
        <taxon>eudicotyledons</taxon>
        <taxon>Gunneridae</taxon>
        <taxon>Pentapetalae</taxon>
        <taxon>rosids</taxon>
        <taxon>malvids</taxon>
        <taxon>Brassicales</taxon>
        <taxon>Brassicaceae</taxon>
        <taxon>Camelineae</taxon>
        <taxon>Arabidopsis</taxon>
    </lineage>
</organism>
<comment type="function">
    <text evidence="1">The phosphorylation of phosphatidylinositol (PI) to PI4P is the first committed step in the generation of phosphatidylinositol 4,5-bisphosphate (PIP2), a precursor of the second messenger inositol 1,4,5-trisphosphate (InsP3).</text>
</comment>
<comment type="catalytic activity">
    <reaction>
        <text>a 1,2-diacyl-sn-glycero-3-phospho-(1D-myo-inositol) + ATP = a 1,2-diacyl-sn-glycero-3-phospho-(1D-myo-inositol 4-phosphate) + ADP + H(+)</text>
        <dbReference type="Rhea" id="RHEA:19877"/>
        <dbReference type="ChEBI" id="CHEBI:15378"/>
        <dbReference type="ChEBI" id="CHEBI:30616"/>
        <dbReference type="ChEBI" id="CHEBI:57880"/>
        <dbReference type="ChEBI" id="CHEBI:58178"/>
        <dbReference type="ChEBI" id="CHEBI:456216"/>
        <dbReference type="EC" id="2.7.1.67"/>
    </reaction>
</comment>
<comment type="similarity">
    <text evidence="4">Belongs to the PI3/PI4-kinase family. Type II PI4K subfamily.</text>
</comment>
<comment type="sequence caution" evidence="4">
    <conflict type="erroneous initiation">
        <sequence resource="EMBL-CDS" id="AEE79542"/>
    </conflict>
    <text>Extended N-terminus.</text>
</comment>
<comment type="sequence caution" evidence="4">
    <conflict type="erroneous initiation">
        <sequence resource="EMBL-CDS" id="BAF01504"/>
    </conflict>
    <text>Extended N-terminus.</text>
</comment>
<sequence>MAVALDPLTDRFSQFSRSSQRCRLQSLTNLDFNFLGFNTKQTNLSASSHSLNNRSVSTPCFSISGSNLDGSATPHIEILGGQRVPTVRSLVAEVTIAIVSGAQPLLLPSGLGGAYLLQTEKGNNIAVAKPVDEEPLAFNNPKGSGGLTLGQPGMKRSIRVGESGIRELAAYLLDHQGFSSVPPTALVRISHVPFHDRGSDHAAYKVASLQRFVGHDFDAGELGPGSFTVVSVHRIGILDVRVLNLDRHAGNMLVKKIHDQDETTCSNGVGAAELVPIDHGLCLPECLDDPYFEWLNWPQASVPFTDIELQYISNLDPFKDAELLRTELDSIQESSLRVLIVCTIFLKEAAAAGLSLAEIGEKMTRDICRGEESSSVLEILCNKAKASAVSGSDDDDDYSSEWNEVEAELECGIFQFDDEVECKELPDMLQVPIFTRVPSIAANLSALMRCPPNQWISTYDTNIEEERRDRSIVRSKSHPICVNYDEKEGVYFGDMSGDEWEMFLHSFQMLLPEALEGSTSKGPKPRFGSSCKF</sequence>
<keyword id="KW-0067">ATP-binding</keyword>
<keyword id="KW-0418">Kinase</keyword>
<keyword id="KW-0547">Nucleotide-binding</keyword>
<keyword id="KW-1185">Reference proteome</keyword>
<keyword id="KW-0808">Transferase</keyword>
<gene>
    <name type="primary">PI4KG8</name>
    <name type="synonym">PI4KGAMMA8</name>
    <name type="ordered locus">At3g56600</name>
    <name type="ORF">T5P19_250</name>
</gene>
<reference key="1">
    <citation type="journal article" date="2000" name="Nature">
        <title>Sequence and analysis of chromosome 3 of the plant Arabidopsis thaliana.</title>
        <authorList>
            <person name="Salanoubat M."/>
            <person name="Lemcke K."/>
            <person name="Rieger M."/>
            <person name="Ansorge W."/>
            <person name="Unseld M."/>
            <person name="Fartmann B."/>
            <person name="Valle G."/>
            <person name="Bloecker H."/>
            <person name="Perez-Alonso M."/>
            <person name="Obermaier B."/>
            <person name="Delseny M."/>
            <person name="Boutry M."/>
            <person name="Grivell L.A."/>
            <person name="Mache R."/>
            <person name="Puigdomenech P."/>
            <person name="De Simone V."/>
            <person name="Choisne N."/>
            <person name="Artiguenave F."/>
            <person name="Robert C."/>
            <person name="Brottier P."/>
            <person name="Wincker P."/>
            <person name="Cattolico L."/>
            <person name="Weissenbach J."/>
            <person name="Saurin W."/>
            <person name="Quetier F."/>
            <person name="Schaefer M."/>
            <person name="Mueller-Auer S."/>
            <person name="Gabel C."/>
            <person name="Fuchs M."/>
            <person name="Benes V."/>
            <person name="Wurmbach E."/>
            <person name="Drzonek H."/>
            <person name="Erfle H."/>
            <person name="Jordan N."/>
            <person name="Bangert S."/>
            <person name="Wiedelmann R."/>
            <person name="Kranz H."/>
            <person name="Voss H."/>
            <person name="Holland R."/>
            <person name="Brandt P."/>
            <person name="Nyakatura G."/>
            <person name="Vezzi A."/>
            <person name="D'Angelo M."/>
            <person name="Pallavicini A."/>
            <person name="Toppo S."/>
            <person name="Simionati B."/>
            <person name="Conrad A."/>
            <person name="Hornischer K."/>
            <person name="Kauer G."/>
            <person name="Loehnert T.-H."/>
            <person name="Nordsiek G."/>
            <person name="Reichelt J."/>
            <person name="Scharfe M."/>
            <person name="Schoen O."/>
            <person name="Bargues M."/>
            <person name="Terol J."/>
            <person name="Climent J."/>
            <person name="Navarro P."/>
            <person name="Collado C."/>
            <person name="Perez-Perez A."/>
            <person name="Ottenwaelder B."/>
            <person name="Duchemin D."/>
            <person name="Cooke R."/>
            <person name="Laudie M."/>
            <person name="Berger-Llauro C."/>
            <person name="Purnelle B."/>
            <person name="Masuy D."/>
            <person name="de Haan M."/>
            <person name="Maarse A.C."/>
            <person name="Alcaraz J.-P."/>
            <person name="Cottet A."/>
            <person name="Casacuberta E."/>
            <person name="Monfort A."/>
            <person name="Argiriou A."/>
            <person name="Flores M."/>
            <person name="Liguori R."/>
            <person name="Vitale D."/>
            <person name="Mannhaupt G."/>
            <person name="Haase D."/>
            <person name="Schoof H."/>
            <person name="Rudd S."/>
            <person name="Zaccaria P."/>
            <person name="Mewes H.-W."/>
            <person name="Mayer K.F.X."/>
            <person name="Kaul S."/>
            <person name="Town C.D."/>
            <person name="Koo H.L."/>
            <person name="Tallon L.J."/>
            <person name="Jenkins J."/>
            <person name="Rooney T."/>
            <person name="Rizzo M."/>
            <person name="Walts A."/>
            <person name="Utterback T."/>
            <person name="Fujii C.Y."/>
            <person name="Shea T.P."/>
            <person name="Creasy T.H."/>
            <person name="Haas B."/>
            <person name="Maiti R."/>
            <person name="Wu D."/>
            <person name="Peterson J."/>
            <person name="Van Aken S."/>
            <person name="Pai G."/>
            <person name="Militscher J."/>
            <person name="Sellers P."/>
            <person name="Gill J.E."/>
            <person name="Feldblyum T.V."/>
            <person name="Preuss D."/>
            <person name="Lin X."/>
            <person name="Nierman W.C."/>
            <person name="Salzberg S.L."/>
            <person name="White O."/>
            <person name="Venter J.C."/>
            <person name="Fraser C.M."/>
            <person name="Kaneko T."/>
            <person name="Nakamura Y."/>
            <person name="Sato S."/>
            <person name="Kato T."/>
            <person name="Asamizu E."/>
            <person name="Sasamoto S."/>
            <person name="Kimura T."/>
            <person name="Idesawa K."/>
            <person name="Kawashima K."/>
            <person name="Kishida Y."/>
            <person name="Kiyokawa C."/>
            <person name="Kohara M."/>
            <person name="Matsumoto M."/>
            <person name="Matsuno A."/>
            <person name="Muraki A."/>
            <person name="Nakayama S."/>
            <person name="Nakazaki N."/>
            <person name="Shinpo S."/>
            <person name="Takeuchi C."/>
            <person name="Wada T."/>
            <person name="Watanabe A."/>
            <person name="Yamada M."/>
            <person name="Yasuda M."/>
            <person name="Tabata S."/>
        </authorList>
    </citation>
    <scope>NUCLEOTIDE SEQUENCE [LARGE SCALE GENOMIC DNA]</scope>
    <source>
        <strain>cv. Columbia</strain>
    </source>
</reference>
<reference key="2">
    <citation type="journal article" date="2017" name="Plant J.">
        <title>Araport11: a complete reannotation of the Arabidopsis thaliana reference genome.</title>
        <authorList>
            <person name="Cheng C.Y."/>
            <person name="Krishnakumar V."/>
            <person name="Chan A.P."/>
            <person name="Thibaud-Nissen F."/>
            <person name="Schobel S."/>
            <person name="Town C.D."/>
        </authorList>
    </citation>
    <scope>GENOME REANNOTATION</scope>
    <source>
        <strain>cv. Columbia</strain>
    </source>
</reference>
<reference key="3">
    <citation type="journal article" date="2006" name="Plant Biotechnol. J.">
        <title>Simultaneous high-throughput recombinational cloning of open reading frames in closed and open configurations.</title>
        <authorList>
            <person name="Underwood B.A."/>
            <person name="Vanderhaeghen R."/>
            <person name="Whitford R."/>
            <person name="Town C.D."/>
            <person name="Hilson P."/>
        </authorList>
    </citation>
    <scope>NUCLEOTIDE SEQUENCE [LARGE SCALE MRNA]</scope>
    <source>
        <strain>cv. Columbia</strain>
    </source>
</reference>
<reference key="4">
    <citation type="submission" date="2006-07" db="EMBL/GenBank/DDBJ databases">
        <title>Large-scale analysis of RIKEN Arabidopsis full-length (RAFL) cDNAs.</title>
        <authorList>
            <person name="Totoki Y."/>
            <person name="Seki M."/>
            <person name="Ishida J."/>
            <person name="Nakajima M."/>
            <person name="Enju A."/>
            <person name="Kamiya A."/>
            <person name="Narusaka M."/>
            <person name="Shin-i T."/>
            <person name="Nakagawa M."/>
            <person name="Sakamoto N."/>
            <person name="Oishi K."/>
            <person name="Kohara Y."/>
            <person name="Kobayashi M."/>
            <person name="Toyoda A."/>
            <person name="Sakaki Y."/>
            <person name="Sakurai T."/>
            <person name="Iida K."/>
            <person name="Akiyama K."/>
            <person name="Satou M."/>
            <person name="Toyoda T."/>
            <person name="Konagaya A."/>
            <person name="Carninci P."/>
            <person name="Kawai J."/>
            <person name="Hayashizaki Y."/>
            <person name="Shinozaki K."/>
        </authorList>
    </citation>
    <scope>NUCLEOTIDE SEQUENCE [LARGE SCALE MRNA]</scope>
    <source>
        <strain>cv. Columbia</strain>
    </source>
</reference>
<reference key="5">
    <citation type="journal article" date="2002" name="Plant Physiol.">
        <title>Inositol phospholipid metabolism in Arabidopsis. Characterized and putative isoforms of inositol phospholipid kinase and phosphoinositide-specific phospholipase C.</title>
        <authorList>
            <person name="Mueller-Roeber B."/>
            <person name="Pical C."/>
        </authorList>
    </citation>
    <scope>GENE FAMILY</scope>
    <scope>NOMENCLATURE</scope>
</reference>
<reference key="6">
    <citation type="journal article" date="2008" name="Biochem. J.">
        <title>Characterization of a new family of protein kinases from Arabidopsis containing phosphoinositide 3/4-kinase and ubiquitin-like domains.</title>
        <authorList>
            <person name="Galvao R.M."/>
            <person name="Kota U."/>
            <person name="Soderblom E.J."/>
            <person name="Goshe M.B."/>
            <person name="Boss W.F."/>
        </authorList>
    </citation>
    <scope>GENE FAMILY</scope>
</reference>
<evidence type="ECO:0000250" key="1"/>
<evidence type="ECO:0000250" key="2">
    <source>
        <dbReference type="UniProtKB" id="Q9BTU6"/>
    </source>
</evidence>
<evidence type="ECO:0000255" key="3">
    <source>
        <dbReference type="PROSITE-ProRule" id="PRU00269"/>
    </source>
</evidence>
<evidence type="ECO:0000305" key="4"/>
<proteinExistence type="evidence at transcript level"/>
<accession>Q0WMZ6</accession>
<accession>Q9LXY0</accession>